<organism>
    <name type="scientific">Haemophilus influenzae (strain PittGG)</name>
    <dbReference type="NCBI Taxonomy" id="374931"/>
    <lineage>
        <taxon>Bacteria</taxon>
        <taxon>Pseudomonadati</taxon>
        <taxon>Pseudomonadota</taxon>
        <taxon>Gammaproteobacteria</taxon>
        <taxon>Pasteurellales</taxon>
        <taxon>Pasteurellaceae</taxon>
        <taxon>Haemophilus</taxon>
    </lineage>
</organism>
<keyword id="KW-0963">Cytoplasm</keyword>
<keyword id="KW-0238">DNA-binding</keyword>
<gene>
    <name type="ordered locus">CGSHiGG_05435</name>
</gene>
<evidence type="ECO:0000255" key="1">
    <source>
        <dbReference type="HAMAP-Rule" id="MF_00274"/>
    </source>
</evidence>
<name>Y5435_HAEIG</name>
<sequence>MFGKGGLGGLMKQAQQMQEKMQKMQEEIAQLEVTGESGAGLVKIAINGAHNCRRIDIDPSLMEDDKEMLEDLIAAAFNDAVRRAEELQKEKMASVTAGMPLPPGMKFPF</sequence>
<dbReference type="EMBL" id="CP000672">
    <property type="protein sequence ID" value="ABR00008.1"/>
    <property type="molecule type" value="Genomic_DNA"/>
</dbReference>
<dbReference type="SMR" id="A5UGV2"/>
<dbReference type="KEGG" id="hiq:CGSHiGG_05435"/>
<dbReference type="HOGENOM" id="CLU_140930_0_0_6"/>
<dbReference type="Proteomes" id="UP000001990">
    <property type="component" value="Chromosome"/>
</dbReference>
<dbReference type="GO" id="GO:0043590">
    <property type="term" value="C:bacterial nucleoid"/>
    <property type="evidence" value="ECO:0007669"/>
    <property type="project" value="UniProtKB-UniRule"/>
</dbReference>
<dbReference type="GO" id="GO:0005829">
    <property type="term" value="C:cytosol"/>
    <property type="evidence" value="ECO:0007669"/>
    <property type="project" value="TreeGrafter"/>
</dbReference>
<dbReference type="GO" id="GO:0003677">
    <property type="term" value="F:DNA binding"/>
    <property type="evidence" value="ECO:0007669"/>
    <property type="project" value="UniProtKB-UniRule"/>
</dbReference>
<dbReference type="FunFam" id="3.30.1310.10:FF:000001">
    <property type="entry name" value="Nucleoid-associated protein YbaB"/>
    <property type="match status" value="1"/>
</dbReference>
<dbReference type="Gene3D" id="3.30.1310.10">
    <property type="entry name" value="Nucleoid-associated protein YbaB-like domain"/>
    <property type="match status" value="1"/>
</dbReference>
<dbReference type="HAMAP" id="MF_00274">
    <property type="entry name" value="DNA_YbaB_EbfC"/>
    <property type="match status" value="1"/>
</dbReference>
<dbReference type="InterPro" id="IPR036894">
    <property type="entry name" value="YbaB-like_sf"/>
</dbReference>
<dbReference type="InterPro" id="IPR004401">
    <property type="entry name" value="YbaB/EbfC"/>
</dbReference>
<dbReference type="NCBIfam" id="TIGR00103">
    <property type="entry name" value="DNA_YbaB_EbfC"/>
    <property type="match status" value="1"/>
</dbReference>
<dbReference type="PANTHER" id="PTHR33449">
    <property type="entry name" value="NUCLEOID-ASSOCIATED PROTEIN YBAB"/>
    <property type="match status" value="1"/>
</dbReference>
<dbReference type="PANTHER" id="PTHR33449:SF1">
    <property type="entry name" value="NUCLEOID-ASSOCIATED PROTEIN YBAB"/>
    <property type="match status" value="1"/>
</dbReference>
<dbReference type="Pfam" id="PF02575">
    <property type="entry name" value="YbaB_DNA_bd"/>
    <property type="match status" value="1"/>
</dbReference>
<dbReference type="PIRSF" id="PIRSF004555">
    <property type="entry name" value="UCP004555"/>
    <property type="match status" value="1"/>
</dbReference>
<dbReference type="SUPFAM" id="SSF82607">
    <property type="entry name" value="YbaB-like"/>
    <property type="match status" value="1"/>
</dbReference>
<reference key="1">
    <citation type="journal article" date="2007" name="Genome Biol.">
        <title>Characterization and modeling of the Haemophilus influenzae core and supragenomes based on the complete genomic sequences of Rd and 12 clinical nontypeable strains.</title>
        <authorList>
            <person name="Hogg J.S."/>
            <person name="Hu F.Z."/>
            <person name="Janto B."/>
            <person name="Boissy R."/>
            <person name="Hayes J."/>
            <person name="Keefe R."/>
            <person name="Post J.C."/>
            <person name="Ehrlich G.D."/>
        </authorList>
    </citation>
    <scope>NUCLEOTIDE SEQUENCE [LARGE SCALE GENOMIC DNA]</scope>
    <source>
        <strain>PittGG</strain>
    </source>
</reference>
<comment type="function">
    <text evidence="1">Binds to DNA and alters its conformation. May be involved in regulation of gene expression, nucleoid organization and DNA protection.</text>
</comment>
<comment type="subunit">
    <text evidence="1">Homodimer.</text>
</comment>
<comment type="subcellular location">
    <subcellularLocation>
        <location evidence="1">Cytoplasm</location>
        <location evidence="1">Nucleoid</location>
    </subcellularLocation>
</comment>
<comment type="similarity">
    <text evidence="1">Belongs to the YbaB/EbfC family.</text>
</comment>
<accession>A5UGV2</accession>
<protein>
    <recommendedName>
        <fullName evidence="1">Nucleoid-associated protein CGSHiGG_05435</fullName>
    </recommendedName>
</protein>
<feature type="chain" id="PRO_1000003748" description="Nucleoid-associated protein CGSHiGG_05435">
    <location>
        <begin position="1"/>
        <end position="109"/>
    </location>
</feature>
<proteinExistence type="inferred from homology"/>